<protein>
    <recommendedName>
        <fullName evidence="1">UPF0260 protein PFLU_1520</fullName>
    </recommendedName>
</protein>
<dbReference type="EMBL" id="AM181176">
    <property type="protein sequence ID" value="CAY47769.1"/>
    <property type="molecule type" value="Genomic_DNA"/>
</dbReference>
<dbReference type="RefSeq" id="WP_012722812.1">
    <property type="nucleotide sequence ID" value="NC_012660.1"/>
</dbReference>
<dbReference type="STRING" id="294.SRM1_01383"/>
<dbReference type="PATRIC" id="fig|216595.4.peg.1743"/>
<dbReference type="eggNOG" id="COG2983">
    <property type="taxonomic scope" value="Bacteria"/>
</dbReference>
<dbReference type="HOGENOM" id="CLU_109769_0_1_6"/>
<dbReference type="OrthoDB" id="9786855at2"/>
<dbReference type="HAMAP" id="MF_00676">
    <property type="entry name" value="UPF0260"/>
    <property type="match status" value="1"/>
</dbReference>
<dbReference type="InterPro" id="IPR005358">
    <property type="entry name" value="Puta_zinc/iron-chelating_dom"/>
</dbReference>
<dbReference type="InterPro" id="IPR008228">
    <property type="entry name" value="UCP006173"/>
</dbReference>
<dbReference type="NCBIfam" id="NF003501">
    <property type="entry name" value="PRK05170.1-5"/>
    <property type="match status" value="1"/>
</dbReference>
<dbReference type="NCBIfam" id="NF003502">
    <property type="entry name" value="PRK05170.1-6"/>
    <property type="match status" value="1"/>
</dbReference>
<dbReference type="NCBIfam" id="NF003507">
    <property type="entry name" value="PRK05170.2-5"/>
    <property type="match status" value="1"/>
</dbReference>
<dbReference type="PANTHER" id="PTHR37421">
    <property type="entry name" value="UPF0260 PROTEIN YCGN"/>
    <property type="match status" value="1"/>
</dbReference>
<dbReference type="PANTHER" id="PTHR37421:SF1">
    <property type="entry name" value="UPF0260 PROTEIN YCGN"/>
    <property type="match status" value="1"/>
</dbReference>
<dbReference type="Pfam" id="PF03692">
    <property type="entry name" value="CxxCxxCC"/>
    <property type="match status" value="1"/>
</dbReference>
<dbReference type="PIRSF" id="PIRSF006173">
    <property type="entry name" value="UCP006173"/>
    <property type="match status" value="1"/>
</dbReference>
<proteinExistence type="inferred from homology"/>
<evidence type="ECO:0000255" key="1">
    <source>
        <dbReference type="HAMAP-Rule" id="MF_00676"/>
    </source>
</evidence>
<feature type="chain" id="PRO_1000212526" description="UPF0260 protein PFLU_1520">
    <location>
        <begin position="1"/>
        <end position="149"/>
    </location>
</feature>
<organism>
    <name type="scientific">Pseudomonas fluorescens (strain SBW25)</name>
    <dbReference type="NCBI Taxonomy" id="216595"/>
    <lineage>
        <taxon>Bacteria</taxon>
        <taxon>Pseudomonadati</taxon>
        <taxon>Pseudomonadota</taxon>
        <taxon>Gammaproteobacteria</taxon>
        <taxon>Pseudomonadales</taxon>
        <taxon>Pseudomonadaceae</taxon>
        <taxon>Pseudomonas</taxon>
    </lineage>
</organism>
<gene>
    <name type="ordered locus">PFLU_1520</name>
</gene>
<comment type="similarity">
    <text evidence="1">Belongs to the UPF0260 family.</text>
</comment>
<name>Y1520_PSEFS</name>
<sequence length="149" mass="17249">MAAKVEPFWIRKTLEHLDQEEWESLCDGCGLCCLQKLEDEDDNSVYYTRIACKLLDLKTCQCTDYPNRRASVPDCIQLTPGQADQFKWLPPTCGYRLVSERNDLPLWHHLVCGDRDAVHHERISQSGRMLSEGSVPEDDWEDYLIFRAG</sequence>
<accession>C3K5F5</accession>
<reference key="1">
    <citation type="journal article" date="2009" name="Genome Biol.">
        <title>Genomic and genetic analyses of diversity and plant interactions of Pseudomonas fluorescens.</title>
        <authorList>
            <person name="Silby M.W."/>
            <person name="Cerdeno-Tarraga A.M."/>
            <person name="Vernikos G.S."/>
            <person name="Giddens S.R."/>
            <person name="Jackson R.W."/>
            <person name="Preston G.M."/>
            <person name="Zhang X.-X."/>
            <person name="Moon C.D."/>
            <person name="Gehrig S.M."/>
            <person name="Godfrey S.A.C."/>
            <person name="Knight C.G."/>
            <person name="Malone J.G."/>
            <person name="Robinson Z."/>
            <person name="Spiers A.J."/>
            <person name="Harris S."/>
            <person name="Challis G.L."/>
            <person name="Yaxley A.M."/>
            <person name="Harris D."/>
            <person name="Seeger K."/>
            <person name="Murphy L."/>
            <person name="Rutter S."/>
            <person name="Squares R."/>
            <person name="Quail M.A."/>
            <person name="Saunders E."/>
            <person name="Mavromatis K."/>
            <person name="Brettin T.S."/>
            <person name="Bentley S.D."/>
            <person name="Hothersall J."/>
            <person name="Stephens E."/>
            <person name="Thomas C.M."/>
            <person name="Parkhill J."/>
            <person name="Levy S.B."/>
            <person name="Rainey P.B."/>
            <person name="Thomson N.R."/>
        </authorList>
    </citation>
    <scope>NUCLEOTIDE SEQUENCE [LARGE SCALE GENOMIC DNA]</scope>
    <source>
        <strain>SBW25</strain>
    </source>
</reference>